<comment type="similarity">
    <text evidence="1">Belongs to the chlamydial CPn_0512/CT_425/TC_0708 family.</text>
</comment>
<comment type="sequence caution" evidence="1">
    <conflict type="erroneous initiation">
        <sequence resource="EMBL-CDS" id="AAF39521"/>
    </conflict>
</comment>
<accession>Q9PJW8</accession>
<dbReference type="EMBL" id="AE002160">
    <property type="protein sequence ID" value="AAF39521.1"/>
    <property type="status" value="ALT_INIT"/>
    <property type="molecule type" value="Genomic_DNA"/>
</dbReference>
<dbReference type="PIR" id="D81674">
    <property type="entry name" value="D81674"/>
</dbReference>
<dbReference type="RefSeq" id="WP_010231284.1">
    <property type="nucleotide sequence ID" value="NZ_CP063055.1"/>
</dbReference>
<dbReference type="GeneID" id="1246071"/>
<dbReference type="KEGG" id="cmu:TC_0708"/>
<dbReference type="eggNOG" id="COG4692">
    <property type="taxonomic scope" value="Bacteria"/>
</dbReference>
<dbReference type="HOGENOM" id="CLU_030250_0_0_0"/>
<dbReference type="OrthoDB" id="543560at2"/>
<dbReference type="Proteomes" id="UP000000800">
    <property type="component" value="Chromosome"/>
</dbReference>
<dbReference type="InterPro" id="IPR022028">
    <property type="entry name" value="DUF3604"/>
</dbReference>
<dbReference type="Pfam" id="PF12228">
    <property type="entry name" value="DUF3604"/>
    <property type="match status" value="1"/>
</dbReference>
<proteinExistence type="inferred from homology"/>
<protein>
    <recommendedName>
        <fullName>Uncharacterized protein TC_0708</fullName>
    </recommendedName>
</protein>
<reference key="1">
    <citation type="journal article" date="2000" name="Nucleic Acids Res.">
        <title>Genome sequences of Chlamydia trachomatis MoPn and Chlamydia pneumoniae AR39.</title>
        <authorList>
            <person name="Read T.D."/>
            <person name="Brunham R.C."/>
            <person name="Shen C."/>
            <person name="Gill S.R."/>
            <person name="Heidelberg J.F."/>
            <person name="White O."/>
            <person name="Hickey E.K."/>
            <person name="Peterson J.D."/>
            <person name="Utterback T.R."/>
            <person name="Berry K.J."/>
            <person name="Bass S."/>
            <person name="Linher K.D."/>
            <person name="Weidman J.F."/>
            <person name="Khouri H.M."/>
            <person name="Craven B."/>
            <person name="Bowman C."/>
            <person name="Dodson R.J."/>
            <person name="Gwinn M.L."/>
            <person name="Nelson W.C."/>
            <person name="DeBoy R.T."/>
            <person name="Kolonay J.F."/>
            <person name="McClarty G."/>
            <person name="Salzberg S.L."/>
            <person name="Eisen J.A."/>
            <person name="Fraser C.M."/>
        </authorList>
    </citation>
    <scope>NUCLEOTIDE SEQUENCE [LARGE SCALE GENOMIC DNA]</scope>
    <source>
        <strain>MoPn / Nigg</strain>
    </source>
</reference>
<name>Y708_CHLMU</name>
<evidence type="ECO:0000305" key="1"/>
<organism>
    <name type="scientific">Chlamydia muridarum (strain MoPn / Nigg)</name>
    <dbReference type="NCBI Taxonomy" id="243161"/>
    <lineage>
        <taxon>Bacteria</taxon>
        <taxon>Pseudomonadati</taxon>
        <taxon>Chlamydiota</taxon>
        <taxon>Chlamydiia</taxon>
        <taxon>Chlamydiales</taxon>
        <taxon>Chlamydiaceae</taxon>
        <taxon>Chlamydia/Chlamydophila group</taxon>
        <taxon>Chlamydia</taxon>
    </lineage>
</organism>
<feature type="chain" id="PRO_0000218392" description="Uncharacterized protein TC_0708">
    <location>
        <begin position="1"/>
        <end position="621"/>
    </location>
</feature>
<sequence>MRRSVCYVTPSVARAGQISTWRFEYSSANFLPEGTLLKFDLGIDGRPIDWEIPSTDLSQPCNTIYLETPSESIVTAKAVYAPGSYIPTFEFILPCEIEAGDTFSIILGSSPNFPQEDASGNGAQLFTQRRKPFSLYVDPTGKGNFEDPDIFTIDIRGNVLKNIRIFAPSYVVKNKRFDITVRFEDEFGNLTNFSPEETQIELSYEHLRENLSWQLFIPETGFVILPNLYFNEPGIYRIQLRNQATKEIFTSAPIKCFTETSPHLLWGLLHGESERVDSEGNIESCLRYFRDDCALNFFATSSFEIQDGLTPETIKSINQTVSDFNEEDRFIALSGAQYVSEEPGEGIREVLLIKEPKSPGKHKECKLFPLSKLYKQSTSHELISIPSFTASKKFGCDFQNFHAEFERVVEIYNAWGCSERTEAEGNPFPIKGSIDSENPEGTILSALKRNLRFGFVAGGLDDRNLYSNFFDSDQQQYSPGLTAVICNKYSRDSLLEALYQRQCYATTGQRIIVSFQITSAPMGSELSTAIKPGLMINRHISGYVAGTAKISTIEIIRNGDTLHTFYPDGNNFEYEYDDLTPFAQATLADPKNGAPFAFYYLRVTQENGAMAWSSPIWIDLN</sequence>
<gene>
    <name type="ordered locus">TC_0708</name>
</gene>